<reference key="1">
    <citation type="journal article" date="2005" name="Science">
        <title>The transcriptional landscape of the mammalian genome.</title>
        <authorList>
            <person name="Carninci P."/>
            <person name="Kasukawa T."/>
            <person name="Katayama S."/>
            <person name="Gough J."/>
            <person name="Frith M.C."/>
            <person name="Maeda N."/>
            <person name="Oyama R."/>
            <person name="Ravasi T."/>
            <person name="Lenhard B."/>
            <person name="Wells C."/>
            <person name="Kodzius R."/>
            <person name="Shimokawa K."/>
            <person name="Bajic V.B."/>
            <person name="Brenner S.E."/>
            <person name="Batalov S."/>
            <person name="Forrest A.R."/>
            <person name="Zavolan M."/>
            <person name="Davis M.J."/>
            <person name="Wilming L.G."/>
            <person name="Aidinis V."/>
            <person name="Allen J.E."/>
            <person name="Ambesi-Impiombato A."/>
            <person name="Apweiler R."/>
            <person name="Aturaliya R.N."/>
            <person name="Bailey T.L."/>
            <person name="Bansal M."/>
            <person name="Baxter L."/>
            <person name="Beisel K.W."/>
            <person name="Bersano T."/>
            <person name="Bono H."/>
            <person name="Chalk A.M."/>
            <person name="Chiu K.P."/>
            <person name="Choudhary V."/>
            <person name="Christoffels A."/>
            <person name="Clutterbuck D.R."/>
            <person name="Crowe M.L."/>
            <person name="Dalla E."/>
            <person name="Dalrymple B.P."/>
            <person name="de Bono B."/>
            <person name="Della Gatta G."/>
            <person name="di Bernardo D."/>
            <person name="Down T."/>
            <person name="Engstrom P."/>
            <person name="Fagiolini M."/>
            <person name="Faulkner G."/>
            <person name="Fletcher C.F."/>
            <person name="Fukushima T."/>
            <person name="Furuno M."/>
            <person name="Futaki S."/>
            <person name="Gariboldi M."/>
            <person name="Georgii-Hemming P."/>
            <person name="Gingeras T.R."/>
            <person name="Gojobori T."/>
            <person name="Green R.E."/>
            <person name="Gustincich S."/>
            <person name="Harbers M."/>
            <person name="Hayashi Y."/>
            <person name="Hensch T.K."/>
            <person name="Hirokawa N."/>
            <person name="Hill D."/>
            <person name="Huminiecki L."/>
            <person name="Iacono M."/>
            <person name="Ikeo K."/>
            <person name="Iwama A."/>
            <person name="Ishikawa T."/>
            <person name="Jakt M."/>
            <person name="Kanapin A."/>
            <person name="Katoh M."/>
            <person name="Kawasawa Y."/>
            <person name="Kelso J."/>
            <person name="Kitamura H."/>
            <person name="Kitano H."/>
            <person name="Kollias G."/>
            <person name="Krishnan S.P."/>
            <person name="Kruger A."/>
            <person name="Kummerfeld S.K."/>
            <person name="Kurochkin I.V."/>
            <person name="Lareau L.F."/>
            <person name="Lazarevic D."/>
            <person name="Lipovich L."/>
            <person name="Liu J."/>
            <person name="Liuni S."/>
            <person name="McWilliam S."/>
            <person name="Madan Babu M."/>
            <person name="Madera M."/>
            <person name="Marchionni L."/>
            <person name="Matsuda H."/>
            <person name="Matsuzawa S."/>
            <person name="Miki H."/>
            <person name="Mignone F."/>
            <person name="Miyake S."/>
            <person name="Morris K."/>
            <person name="Mottagui-Tabar S."/>
            <person name="Mulder N."/>
            <person name="Nakano N."/>
            <person name="Nakauchi H."/>
            <person name="Ng P."/>
            <person name="Nilsson R."/>
            <person name="Nishiguchi S."/>
            <person name="Nishikawa S."/>
            <person name="Nori F."/>
            <person name="Ohara O."/>
            <person name="Okazaki Y."/>
            <person name="Orlando V."/>
            <person name="Pang K.C."/>
            <person name="Pavan W.J."/>
            <person name="Pavesi G."/>
            <person name="Pesole G."/>
            <person name="Petrovsky N."/>
            <person name="Piazza S."/>
            <person name="Reed J."/>
            <person name="Reid J.F."/>
            <person name="Ring B.Z."/>
            <person name="Ringwald M."/>
            <person name="Rost B."/>
            <person name="Ruan Y."/>
            <person name="Salzberg S.L."/>
            <person name="Sandelin A."/>
            <person name="Schneider C."/>
            <person name="Schoenbach C."/>
            <person name="Sekiguchi K."/>
            <person name="Semple C.A."/>
            <person name="Seno S."/>
            <person name="Sessa L."/>
            <person name="Sheng Y."/>
            <person name="Shibata Y."/>
            <person name="Shimada H."/>
            <person name="Shimada K."/>
            <person name="Silva D."/>
            <person name="Sinclair B."/>
            <person name="Sperling S."/>
            <person name="Stupka E."/>
            <person name="Sugiura K."/>
            <person name="Sultana R."/>
            <person name="Takenaka Y."/>
            <person name="Taki K."/>
            <person name="Tammoja K."/>
            <person name="Tan S.L."/>
            <person name="Tang S."/>
            <person name="Taylor M.S."/>
            <person name="Tegner J."/>
            <person name="Teichmann S.A."/>
            <person name="Ueda H.R."/>
            <person name="van Nimwegen E."/>
            <person name="Verardo R."/>
            <person name="Wei C.L."/>
            <person name="Yagi K."/>
            <person name="Yamanishi H."/>
            <person name="Zabarovsky E."/>
            <person name="Zhu S."/>
            <person name="Zimmer A."/>
            <person name="Hide W."/>
            <person name="Bult C."/>
            <person name="Grimmond S.M."/>
            <person name="Teasdale R.D."/>
            <person name="Liu E.T."/>
            <person name="Brusic V."/>
            <person name="Quackenbush J."/>
            <person name="Wahlestedt C."/>
            <person name="Mattick J.S."/>
            <person name="Hume D.A."/>
            <person name="Kai C."/>
            <person name="Sasaki D."/>
            <person name="Tomaru Y."/>
            <person name="Fukuda S."/>
            <person name="Kanamori-Katayama M."/>
            <person name="Suzuki M."/>
            <person name="Aoki J."/>
            <person name="Arakawa T."/>
            <person name="Iida J."/>
            <person name="Imamura K."/>
            <person name="Itoh M."/>
            <person name="Kato T."/>
            <person name="Kawaji H."/>
            <person name="Kawagashira N."/>
            <person name="Kawashima T."/>
            <person name="Kojima M."/>
            <person name="Kondo S."/>
            <person name="Konno H."/>
            <person name="Nakano K."/>
            <person name="Ninomiya N."/>
            <person name="Nishio T."/>
            <person name="Okada M."/>
            <person name="Plessy C."/>
            <person name="Shibata K."/>
            <person name="Shiraki T."/>
            <person name="Suzuki S."/>
            <person name="Tagami M."/>
            <person name="Waki K."/>
            <person name="Watahiki A."/>
            <person name="Okamura-Oho Y."/>
            <person name="Suzuki H."/>
            <person name="Kawai J."/>
            <person name="Hayashizaki Y."/>
        </authorList>
    </citation>
    <scope>NUCLEOTIDE SEQUENCE [LARGE SCALE MRNA] (ISOFORMS 1; 2; 3; 4; 5; 6; 8 AND 9)</scope>
    <source>
        <strain>C57BL/6J</strain>
        <tissue>Adipose tissue</tissue>
        <tissue>Cerebellum</tissue>
        <tissue>Corpora quadrigemina</tissue>
        <tissue>Head</tissue>
        <tissue>Liver</tissue>
        <tissue>Ovary</tissue>
        <tissue>Testis</tissue>
        <tissue>Thymus</tissue>
        <tissue>Uterus</tissue>
    </source>
</reference>
<reference key="2">
    <citation type="journal article" date="2004" name="Genome Res.">
        <title>The status, quality, and expansion of the NIH full-length cDNA project: the Mammalian Gene Collection (MGC).</title>
        <authorList>
            <consortium name="The MGC Project Team"/>
        </authorList>
    </citation>
    <scope>NUCLEOTIDE SEQUENCE [LARGE SCALE MRNA] (ISOFORMS 1 AND 7)</scope>
    <source>
        <strain>C57BL/6J</strain>
        <tissue>Brain</tissue>
        <tissue>Eye</tissue>
    </source>
</reference>
<reference key="3">
    <citation type="journal article" date="2010" name="Cell">
        <title>A tissue-specific atlas of mouse protein phosphorylation and expression.</title>
        <authorList>
            <person name="Huttlin E.L."/>
            <person name="Jedrychowski M.P."/>
            <person name="Elias J.E."/>
            <person name="Goswami T."/>
            <person name="Rad R."/>
            <person name="Beausoleil S.A."/>
            <person name="Villen J."/>
            <person name="Haas W."/>
            <person name="Sowa M.E."/>
            <person name="Gygi S.P."/>
        </authorList>
    </citation>
    <scope>IDENTIFICATION BY MASS SPECTROMETRY [LARGE SCALE ANALYSIS]</scope>
    <source>
        <tissue>Spleen</tissue>
    </source>
</reference>
<reference key="4">
    <citation type="journal article" date="2018" name="Nat. Genet.">
        <title>A CRISPR-based screen for Hedgehog signaling provides insights into ciliary function and ciliopathies.</title>
        <authorList>
            <person name="Breslow D.K."/>
            <person name="Hoogendoorn S."/>
            <person name="Kopp A.R."/>
            <person name="Morgens D.W."/>
            <person name="Vu B.K."/>
            <person name="Kennedy M.C."/>
            <person name="Han K."/>
            <person name="Li A."/>
            <person name="Hess G.T."/>
            <person name="Bassik M.C."/>
            <person name="Chen J.K."/>
            <person name="Nachury M.V."/>
        </authorList>
    </citation>
    <scope>FUNCTION</scope>
    <scope>SUBCELLULAR LOCATION</scope>
</reference>
<proteinExistence type="evidence at protein level"/>
<sequence length="817" mass="91922">MGDILAHESELLGLVKEYLDFAEFEDTLKTFSKECKVKGKPLCKNVGGPLKKDSKSLVIQRDLVAAFDSGDQKAFFDLWEGHIPSSVRDTDSLAQKLEFYLHIHFAIYLLKYCRGRPDKQELDKRISYFKTYLETKGAALSQTTEFLPFYALPFVPNPMVHPSFKELFQDSWTPELKLKLEKFLALTFKANNTPKLLTIYKENGPNSKELLQQLHQQLVEAERRAMTYLKRYNKIQADYHNLIGVTAELVDSLEATVSGKMITPEYLQSVCVRLFSNQMRQSLAHSVDFTRPGTASTMLRASLAPEKLKDVPLLPSLDYEKLKKDLIWGSDRLKAFLLQALRWRLTTSHPGEQRETVLQAYISNDLLDCHSHNQRSVLQLLHSKSEAVRQYMARLINALASLAEGRLYLAQNTKVLRMLEGRLKEEDKDVITRENVLGALQKFSLRRPLQTAMIRDGLIFWLIDLLKDPDCLSDYTLEYSVALLMNLCLRSAGKNMCAKVAGLMLKVLSDLLGHENHEIQPYVNGALYSILSIPSIREEARAMGMEDILRCFIKEGNAEMIRQIEFIIKQLNSEDLLDGVLESDDDEDEDDEEDHDIMEADLDKDELIQPQLGELSGEKLLTTEYLGIMTNTGKARRKGPASVQWSGDEPLRRPVTPGGHRTGCPVLGDHLISPQNAQQARNGCLRAMPVAHPDDYKEGKPGVTGCGTSSSFMDHKPREWSPAGHQKSRLVPTAALGWPREMTQDPSSGHITREFVPAFTCKPQVPSTPETVEQNPLKAKALSLAPQFSSSGPQQASRPASTASSTRGLHSSQSIRK</sequence>
<feature type="chain" id="PRO_0000280596" description="LisH domain-containing protein ARMC9">
    <location>
        <begin position="1"/>
        <end position="817"/>
    </location>
</feature>
<feature type="domain" description="LisH" evidence="4">
    <location>
        <begin position="7"/>
        <end position="39"/>
    </location>
</feature>
<feature type="region of interest" description="Disordered" evidence="5">
    <location>
        <begin position="637"/>
        <end position="659"/>
    </location>
</feature>
<feature type="region of interest" description="Disordered" evidence="5">
    <location>
        <begin position="761"/>
        <end position="817"/>
    </location>
</feature>
<feature type="coiled-coil region" evidence="3">
    <location>
        <begin position="204"/>
        <end position="230"/>
    </location>
</feature>
<feature type="compositionally biased region" description="Polar residues" evidence="5">
    <location>
        <begin position="765"/>
        <end position="774"/>
    </location>
</feature>
<feature type="compositionally biased region" description="Low complexity" evidence="5">
    <location>
        <begin position="793"/>
        <end position="807"/>
    </location>
</feature>
<feature type="compositionally biased region" description="Polar residues" evidence="5">
    <location>
        <begin position="808"/>
        <end position="817"/>
    </location>
</feature>
<feature type="modified residue" description="Phosphoserine" evidence="2">
    <location>
        <position position="583"/>
    </location>
</feature>
<feature type="splice variant" id="VSP_023805" description="In isoform 6." evidence="8">
    <location>
        <begin position="1"/>
        <end position="559"/>
    </location>
</feature>
<feature type="splice variant" id="VSP_023806" description="In isoform 7." evidence="7">
    <location>
        <begin position="1"/>
        <end position="235"/>
    </location>
</feature>
<feature type="splice variant" id="VSP_023807" description="In isoform 9." evidence="8">
    <original>KENGP</original>
    <variation>VSFMK</variation>
    <location>
        <begin position="201"/>
        <end position="205"/>
    </location>
</feature>
<feature type="splice variant" id="VSP_023808" description="In isoform 9." evidence="8">
    <location>
        <begin position="206"/>
        <end position="817"/>
    </location>
</feature>
<feature type="splice variant" id="VSP_023809" description="In isoform 7." evidence="7">
    <original>Q</original>
    <variation>M</variation>
    <location>
        <position position="236"/>
    </location>
</feature>
<feature type="splice variant" id="VSP_023810" description="In isoform 8." evidence="8">
    <original>ASTMLRASLAPEKLKDVPLL</original>
    <variation>GTEDWAEKGDHISKPKRGTR</variation>
    <location>
        <begin position="295"/>
        <end position="314"/>
    </location>
</feature>
<feature type="splice variant" id="VSP_023813" description="In isoform 8." evidence="8">
    <location>
        <begin position="315"/>
        <end position="817"/>
    </location>
</feature>
<feature type="splice variant" id="VSP_023811" description="In isoform 5." evidence="8">
    <location>
        <position position="574"/>
    </location>
</feature>
<feature type="splice variant" id="VSP_023812" description="In isoform 2." evidence="8">
    <location>
        <begin position="667"/>
        <end position="817"/>
    </location>
</feature>
<feature type="splice variant" id="VSP_023814" description="In isoform 4, isoform 6 and isoform 7." evidence="7 8">
    <original>FMDHKPREWSPAGHQKSRLV</original>
    <variation>CKNAVGAKPVLSSWAQESKR</variation>
    <location>
        <begin position="712"/>
        <end position="731"/>
    </location>
</feature>
<feature type="splice variant" id="VSP_023815" description="In isoform 3." evidence="8">
    <original>F</original>
    <variation>SV</variation>
    <location>
        <position position="712"/>
    </location>
</feature>
<feature type="splice variant" id="VSP_023816" description="In isoform 4, isoform 6 and isoform 7." evidence="7 8">
    <location>
        <begin position="732"/>
        <end position="817"/>
    </location>
</feature>
<feature type="sequence conflict" description="In Ref. 1; BAC26890." evidence="9" ref="1">
    <original>K</original>
    <variation>Q</variation>
    <location>
        <position position="36"/>
    </location>
</feature>
<feature type="sequence conflict" description="In Ref. 1; BAC33231." evidence="9" ref="1">
    <original>P</original>
    <variation>T</variation>
    <location>
        <position position="153"/>
    </location>
</feature>
<feature type="sequence conflict" description="In Ref. 1; BAC26890." evidence="9" ref="1">
    <original>N</original>
    <variation>K</variation>
    <location>
        <position position="277"/>
    </location>
</feature>
<feature type="sequence conflict" description="In Ref. 1; BAC29299." evidence="9" ref="1">
    <original>D</original>
    <variation>G</variation>
    <location>
        <position position="427"/>
    </location>
</feature>
<feature type="sequence conflict" description="In Ref. 1; BAC32462." evidence="9" ref="1">
    <original>L</original>
    <variation>I</variation>
    <location>
        <position position="437"/>
    </location>
</feature>
<name>ARMC9_MOUSE</name>
<accession>Q9D2I5</accession>
<accession>Q8BQQ3</accession>
<accession>Q8BR45</accession>
<accession>Q8BSX7</accession>
<accession>Q8C6A6</accession>
<accession>Q8C889</accession>
<accession>Q8CA23</accession>
<accession>Q8CBG2</accession>
<accession>Q8K112</accession>
<accession>Q9CYL1</accession>
<accession>Q9D2L3</accession>
<comment type="function">
    <text evidence="1 2 6">Involved in ciliogenesis (By similarity). It is required for appropriate acetylation and polyglutamylation of ciliary microtubules, and regulation of cilium length (By similarity). Acts as a positive regulator of hedgehog (Hh) signaling (PubMed:29459677). May participate in the trafficking and/or retention of GLI2 and GLI3 proteins at the ciliary tip (PubMed:29459677).</text>
</comment>
<comment type="subunit">
    <text evidence="2">Interacts with TOGARAM1, CCDC66, CEP104, CSPP1 and CEP290. Interacts with NDUFAF2 (By similarity).</text>
</comment>
<comment type="subcellular location">
    <subcellularLocation>
        <location evidence="2">Cytoplasm</location>
        <location evidence="2">Cytoskeleton</location>
        <location evidence="2">Cilium basal body</location>
    </subcellularLocation>
    <subcellularLocation>
        <location evidence="6">Cell projection</location>
        <location evidence="6">Cilium</location>
    </subcellularLocation>
    <subcellularLocation>
        <location evidence="2">Cytoplasm</location>
        <location evidence="2">Cytoskeleton</location>
        <location evidence="2">Microtubule organizing center</location>
        <location evidence="2">Centrosome</location>
        <location evidence="2">Centriole</location>
    </subcellularLocation>
    <text evidence="2 6">Localized to the proximal region in cilia. Stimulation of Hh signaling leads to redistribution of ARMC9 toward the ciliary tip within 6 hours, follow by a gradual return to its original proximal location (PubMed:29459677). Localizes to the daughter centriole of the primary cilium in RPE1 cells (By similarity).</text>
</comment>
<comment type="alternative products">
    <event type="alternative splicing"/>
    <isoform>
        <id>Q9D2I5-1</id>
        <name>1</name>
        <sequence type="displayed"/>
    </isoform>
    <isoform>
        <id>Q9D2I5-2</id>
        <name>2</name>
        <sequence type="described" ref="VSP_023812"/>
    </isoform>
    <isoform>
        <id>Q9D2I5-3</id>
        <name>3</name>
        <sequence type="described" ref="VSP_023815"/>
    </isoform>
    <isoform>
        <id>Q9D2I5-4</id>
        <name>4</name>
        <sequence type="described" ref="VSP_023814 VSP_023816"/>
    </isoform>
    <isoform>
        <id>Q9D2I5-5</id>
        <name>5</name>
        <sequence type="described" ref="VSP_023811"/>
    </isoform>
    <isoform>
        <id>Q9D2I5-6</id>
        <name>6</name>
        <sequence type="described" ref="VSP_023805 VSP_023814 VSP_023816"/>
    </isoform>
    <isoform>
        <id>Q9D2I5-7</id>
        <name>7</name>
        <sequence type="described" ref="VSP_023806 VSP_023809 VSP_023814 VSP_023816"/>
    </isoform>
    <isoform>
        <id>Q9D2I5-8</id>
        <name>8</name>
        <sequence type="described" ref="VSP_023810 VSP_023813"/>
    </isoform>
    <isoform>
        <id>Q9D2I5-9</id>
        <name>9</name>
        <sequence type="described" ref="VSP_023807 VSP_023808"/>
    </isoform>
</comment>
<organism>
    <name type="scientific">Mus musculus</name>
    <name type="common">Mouse</name>
    <dbReference type="NCBI Taxonomy" id="10090"/>
    <lineage>
        <taxon>Eukaryota</taxon>
        <taxon>Metazoa</taxon>
        <taxon>Chordata</taxon>
        <taxon>Craniata</taxon>
        <taxon>Vertebrata</taxon>
        <taxon>Euteleostomi</taxon>
        <taxon>Mammalia</taxon>
        <taxon>Eutheria</taxon>
        <taxon>Euarchontoglires</taxon>
        <taxon>Glires</taxon>
        <taxon>Rodentia</taxon>
        <taxon>Myomorpha</taxon>
        <taxon>Muroidea</taxon>
        <taxon>Muridae</taxon>
        <taxon>Murinae</taxon>
        <taxon>Mus</taxon>
        <taxon>Mus</taxon>
    </lineage>
</organism>
<gene>
    <name evidence="10" type="primary">Armc9</name>
</gene>
<dbReference type="EMBL" id="AK017564">
    <property type="protein sequence ID" value="BAB30807.1"/>
    <property type="molecule type" value="mRNA"/>
</dbReference>
<dbReference type="EMBL" id="AK019512">
    <property type="protein sequence ID" value="BAB31770.1"/>
    <property type="molecule type" value="mRNA"/>
</dbReference>
<dbReference type="EMBL" id="AK019600">
    <property type="protein sequence ID" value="BAB31811.1"/>
    <property type="molecule type" value="mRNA"/>
</dbReference>
<dbReference type="EMBL" id="AK030307">
    <property type="protein sequence ID" value="BAC26890.1"/>
    <property type="molecule type" value="mRNA"/>
</dbReference>
<dbReference type="EMBL" id="AK036083">
    <property type="protein sequence ID" value="BAC29299.1"/>
    <property type="molecule type" value="mRNA"/>
</dbReference>
<dbReference type="EMBL" id="AK039800">
    <property type="protein sequence ID" value="BAC30457.1"/>
    <property type="molecule type" value="mRNA"/>
</dbReference>
<dbReference type="EMBL" id="AK046693">
    <property type="protein sequence ID" value="BAC32837.1"/>
    <property type="molecule type" value="mRNA"/>
</dbReference>
<dbReference type="EMBL" id="AK045699">
    <property type="protein sequence ID" value="BAC32462.1"/>
    <property type="molecule type" value="mRNA"/>
</dbReference>
<dbReference type="EMBL" id="AK048064">
    <property type="protein sequence ID" value="BAC33231.1"/>
    <property type="molecule type" value="mRNA"/>
</dbReference>
<dbReference type="EMBL" id="AK076239">
    <property type="protein sequence ID" value="BAC36270.1"/>
    <property type="molecule type" value="mRNA"/>
</dbReference>
<dbReference type="EMBL" id="AK161393">
    <property type="protein sequence ID" value="BAE36370.1"/>
    <property type="molecule type" value="mRNA"/>
</dbReference>
<dbReference type="EMBL" id="BC028964">
    <property type="protein sequence ID" value="AAH28964.1"/>
    <property type="molecule type" value="mRNA"/>
</dbReference>
<dbReference type="EMBL" id="BC043101">
    <property type="protein sequence ID" value="AAH43101.1"/>
    <property type="molecule type" value="mRNA"/>
</dbReference>
<dbReference type="CCDS" id="CCDS15118.1">
    <molecule id="Q9D2I5-1"/>
</dbReference>
<dbReference type="CCDS" id="CCDS48303.1">
    <molecule id="Q9D2I5-2"/>
</dbReference>
<dbReference type="CCDS" id="CCDS78642.1">
    <molecule id="Q9D2I5-3"/>
</dbReference>
<dbReference type="RefSeq" id="NP_001297631.1">
    <molecule id="Q9D2I5-3"/>
    <property type="nucleotide sequence ID" value="NM_001310702.2"/>
</dbReference>
<dbReference type="RefSeq" id="NP_081732.1">
    <molecule id="Q9D2I5-2"/>
    <property type="nucleotide sequence ID" value="NM_027456.3"/>
</dbReference>
<dbReference type="RefSeq" id="NP_084460.1">
    <molecule id="Q9D2I5-1"/>
    <property type="nucleotide sequence ID" value="NM_030184.3"/>
</dbReference>
<dbReference type="RefSeq" id="XP_006530019.1">
    <molecule id="Q9D2I5-5"/>
    <property type="nucleotide sequence ID" value="XM_006529956.5"/>
</dbReference>
<dbReference type="SMR" id="Q9D2I5"/>
<dbReference type="BioGRID" id="219638">
    <property type="interactions" value="1"/>
</dbReference>
<dbReference type="FunCoup" id="Q9D2I5">
    <property type="interactions" value="466"/>
</dbReference>
<dbReference type="STRING" id="10090.ENSMUSP00000108934"/>
<dbReference type="GlyGen" id="Q9D2I5">
    <property type="glycosylation" value="1 site"/>
</dbReference>
<dbReference type="iPTMnet" id="Q9D2I5"/>
<dbReference type="PhosphoSitePlus" id="Q9D2I5"/>
<dbReference type="PaxDb" id="10090-ENSMUSP00000108934"/>
<dbReference type="ProteomicsDB" id="277295">
    <molecule id="Q9D2I5-1"/>
</dbReference>
<dbReference type="ProteomicsDB" id="277296">
    <molecule id="Q9D2I5-2"/>
</dbReference>
<dbReference type="ProteomicsDB" id="277297">
    <molecule id="Q9D2I5-3"/>
</dbReference>
<dbReference type="ProteomicsDB" id="277298">
    <molecule id="Q9D2I5-4"/>
</dbReference>
<dbReference type="ProteomicsDB" id="277299">
    <molecule id="Q9D2I5-5"/>
</dbReference>
<dbReference type="ProteomicsDB" id="277300">
    <molecule id="Q9D2I5-6"/>
</dbReference>
<dbReference type="ProteomicsDB" id="277301">
    <molecule id="Q9D2I5-7"/>
</dbReference>
<dbReference type="ProteomicsDB" id="277302">
    <molecule id="Q9D2I5-8"/>
</dbReference>
<dbReference type="ProteomicsDB" id="277303">
    <molecule id="Q9D2I5-9"/>
</dbReference>
<dbReference type="Pumba" id="Q9D2I5"/>
<dbReference type="Antibodypedia" id="20202">
    <property type="antibodies" value="106 antibodies from 18 providers"/>
</dbReference>
<dbReference type="DNASU" id="78795"/>
<dbReference type="Ensembl" id="ENSMUST00000027434.15">
    <molecule id="Q9D2I5-1"/>
    <property type="protein sequence ID" value="ENSMUSP00000027434.9"/>
    <property type="gene ID" value="ENSMUSG00000062590.14"/>
</dbReference>
<dbReference type="Ensembl" id="ENSMUST00000113309.9">
    <molecule id="Q9D2I5-3"/>
    <property type="protein sequence ID" value="ENSMUSP00000108934.3"/>
    <property type="gene ID" value="ENSMUSG00000062590.14"/>
</dbReference>
<dbReference type="Ensembl" id="ENSMUST00000131412.8">
    <molecule id="Q9D2I5-2"/>
    <property type="protein sequence ID" value="ENSMUSP00000117267.2"/>
    <property type="gene ID" value="ENSMUSG00000062590.14"/>
</dbReference>
<dbReference type="GeneID" id="78795"/>
<dbReference type="KEGG" id="mmu:78795"/>
<dbReference type="UCSC" id="uc007bva.1">
    <molecule id="Q9D2I5-9"/>
    <property type="organism name" value="mouse"/>
</dbReference>
<dbReference type="UCSC" id="uc007bvb.1">
    <molecule id="Q9D2I5-8"/>
    <property type="organism name" value="mouse"/>
</dbReference>
<dbReference type="UCSC" id="uc007bvc.1">
    <molecule id="Q9D2I5-1"/>
    <property type="organism name" value="mouse"/>
</dbReference>
<dbReference type="UCSC" id="uc007bvf.1">
    <molecule id="Q9D2I5-4"/>
    <property type="organism name" value="mouse"/>
</dbReference>
<dbReference type="UCSC" id="uc007bvh.1">
    <molecule id="Q9D2I5-5"/>
    <property type="organism name" value="mouse"/>
</dbReference>
<dbReference type="UCSC" id="uc007bvi.1">
    <molecule id="Q9D2I5-3"/>
    <property type="organism name" value="mouse"/>
</dbReference>
<dbReference type="AGR" id="MGI:1926045"/>
<dbReference type="CTD" id="80210"/>
<dbReference type="MGI" id="MGI:1926045">
    <property type="gene designation" value="Armc9"/>
</dbReference>
<dbReference type="VEuPathDB" id="HostDB:ENSMUSG00000062590"/>
<dbReference type="eggNOG" id="ENOG502QQ9W">
    <property type="taxonomic scope" value="Eukaryota"/>
</dbReference>
<dbReference type="GeneTree" id="ENSGT00390000018026"/>
<dbReference type="HOGENOM" id="CLU_007962_1_0_1"/>
<dbReference type="InParanoid" id="Q9D2I5"/>
<dbReference type="OMA" id="QQSDKEF"/>
<dbReference type="PhylomeDB" id="Q9D2I5"/>
<dbReference type="TreeFam" id="TF317676"/>
<dbReference type="BioGRID-ORCS" id="78795">
    <property type="hits" value="4 hits in 76 CRISPR screens"/>
</dbReference>
<dbReference type="ChiTaRS" id="Armc9">
    <property type="organism name" value="mouse"/>
</dbReference>
<dbReference type="PRO" id="PR:Q9D2I5"/>
<dbReference type="Proteomes" id="UP000000589">
    <property type="component" value="Chromosome 1"/>
</dbReference>
<dbReference type="RNAct" id="Q9D2I5">
    <property type="molecule type" value="protein"/>
</dbReference>
<dbReference type="Bgee" id="ENSMUSG00000062590">
    <property type="expression patterns" value="Expressed in spermatocyte and 186 other cell types or tissues"/>
</dbReference>
<dbReference type="ExpressionAtlas" id="Q9D2I5">
    <property type="expression patterns" value="baseline and differential"/>
</dbReference>
<dbReference type="GO" id="GO:0005814">
    <property type="term" value="C:centriole"/>
    <property type="evidence" value="ECO:0000250"/>
    <property type="project" value="UniProtKB"/>
</dbReference>
<dbReference type="GO" id="GO:0036064">
    <property type="term" value="C:ciliary basal body"/>
    <property type="evidence" value="ECO:0000250"/>
    <property type="project" value="UniProtKB"/>
</dbReference>
<dbReference type="GO" id="GO:0097542">
    <property type="term" value="C:ciliary tip"/>
    <property type="evidence" value="ECO:0000314"/>
    <property type="project" value="UniProtKB"/>
</dbReference>
<dbReference type="GO" id="GO:0005929">
    <property type="term" value="C:cilium"/>
    <property type="evidence" value="ECO:0000314"/>
    <property type="project" value="UniProtKB"/>
</dbReference>
<dbReference type="GO" id="GO:0005737">
    <property type="term" value="C:cytoplasm"/>
    <property type="evidence" value="ECO:0007669"/>
    <property type="project" value="UniProtKB-KW"/>
</dbReference>
<dbReference type="GO" id="GO:0060271">
    <property type="term" value="P:cilium assembly"/>
    <property type="evidence" value="ECO:0000250"/>
    <property type="project" value="UniProtKB"/>
</dbReference>
<dbReference type="GO" id="GO:0045880">
    <property type="term" value="P:positive regulation of smoothened signaling pathway"/>
    <property type="evidence" value="ECO:0000314"/>
    <property type="project" value="UniProtKB"/>
</dbReference>
<dbReference type="FunFam" id="1.25.10.10:FF:000124">
    <property type="entry name" value="lisH domain-containing protein ARMC9 isoform X1"/>
    <property type="match status" value="1"/>
</dbReference>
<dbReference type="Gene3D" id="1.25.10.10">
    <property type="entry name" value="Leucine-rich Repeat Variant"/>
    <property type="match status" value="1"/>
</dbReference>
<dbReference type="InterPro" id="IPR011989">
    <property type="entry name" value="ARM-like"/>
</dbReference>
<dbReference type="InterPro" id="IPR016024">
    <property type="entry name" value="ARM-type_fold"/>
</dbReference>
<dbReference type="InterPro" id="IPR040369">
    <property type="entry name" value="ARMC9"/>
</dbReference>
<dbReference type="InterPro" id="IPR048959">
    <property type="entry name" value="ARMC9_ARM_dom"/>
</dbReference>
<dbReference type="InterPro" id="IPR056327">
    <property type="entry name" value="ARMC9_CTLH-like_dom"/>
</dbReference>
<dbReference type="InterPro" id="IPR048957">
    <property type="entry name" value="ARMC9_LisH"/>
</dbReference>
<dbReference type="InterPro" id="IPR006594">
    <property type="entry name" value="LisH"/>
</dbReference>
<dbReference type="PANTHER" id="PTHR14881">
    <property type="entry name" value="LISH DOMAIN-CONTAINING PROTEIN ARMC9"/>
    <property type="match status" value="1"/>
</dbReference>
<dbReference type="PANTHER" id="PTHR14881:SF4">
    <property type="entry name" value="LISH DOMAIN-CONTAINING PROTEIN ARMC9"/>
    <property type="match status" value="1"/>
</dbReference>
<dbReference type="Pfam" id="PF21050">
    <property type="entry name" value="ARMC9_ARM"/>
    <property type="match status" value="1"/>
</dbReference>
<dbReference type="Pfam" id="PF21051">
    <property type="entry name" value="ARMC9_LisH"/>
    <property type="match status" value="1"/>
</dbReference>
<dbReference type="Pfam" id="PF23138">
    <property type="entry name" value="CTLH_Armc9"/>
    <property type="match status" value="1"/>
</dbReference>
<dbReference type="SMART" id="SM00667">
    <property type="entry name" value="LisH"/>
    <property type="match status" value="1"/>
</dbReference>
<dbReference type="SUPFAM" id="SSF48371">
    <property type="entry name" value="ARM repeat"/>
    <property type="match status" value="1"/>
</dbReference>
<dbReference type="PROSITE" id="PS50896">
    <property type="entry name" value="LISH"/>
    <property type="match status" value="1"/>
</dbReference>
<keyword id="KW-0025">Alternative splicing</keyword>
<keyword id="KW-0966">Cell projection</keyword>
<keyword id="KW-0970">Cilium biogenesis/degradation</keyword>
<keyword id="KW-0175">Coiled coil</keyword>
<keyword id="KW-0963">Cytoplasm</keyword>
<keyword id="KW-0206">Cytoskeleton</keyword>
<keyword id="KW-0597">Phosphoprotein</keyword>
<keyword id="KW-1185">Reference proteome</keyword>
<protein>
    <recommendedName>
        <fullName>LisH domain-containing protein ARMC9</fullName>
    </recommendedName>
</protein>
<evidence type="ECO:0000250" key="1">
    <source>
        <dbReference type="UniProtKB" id="E7F187"/>
    </source>
</evidence>
<evidence type="ECO:0000250" key="2">
    <source>
        <dbReference type="UniProtKB" id="Q7Z3E5"/>
    </source>
</evidence>
<evidence type="ECO:0000255" key="3"/>
<evidence type="ECO:0000255" key="4">
    <source>
        <dbReference type="PROSITE-ProRule" id="PRU00126"/>
    </source>
</evidence>
<evidence type="ECO:0000256" key="5">
    <source>
        <dbReference type="SAM" id="MobiDB-lite"/>
    </source>
</evidence>
<evidence type="ECO:0000269" key="6">
    <source>
    </source>
</evidence>
<evidence type="ECO:0000303" key="7">
    <source>
    </source>
</evidence>
<evidence type="ECO:0000303" key="8">
    <source>
    </source>
</evidence>
<evidence type="ECO:0000305" key="9"/>
<evidence type="ECO:0000312" key="10">
    <source>
        <dbReference type="MGI" id="MGI:1926045"/>
    </source>
</evidence>